<sequence>MARRALDGVLLLDKPVGLSSNDALMRAKRLYQAKKAGHTGTLDPLASGLLPLCFGEATKFSQDLLEADKTYEATMRLGVRTTTGDAEGDVLDTRDVSCDEAAVRAALARFVGEIVQVPPMYSALKRDGKPLYEYARAGQTVEREGRTVTIRALALVSCALPDVTFRVTCSKGTYVRTLAEDIGEALGCGAHLTMLRRTGVGPLTLEHAVTLDALDAATQDERDARLAPVDALLSTFPCVKLDAALATRFLHGQRLKLSELAARPDAAEGGRVRVYDADDRLLGVARASEGVLAPERLVVTGA</sequence>
<keyword id="KW-0413">Isomerase</keyword>
<keyword id="KW-0819">tRNA processing</keyword>
<gene>
    <name evidence="1" type="primary">truB</name>
    <name type="ordered locus">BMA10247_0993</name>
</gene>
<reference key="1">
    <citation type="journal article" date="2010" name="Genome Biol. Evol.">
        <title>Continuing evolution of Burkholderia mallei through genome reduction and large-scale rearrangements.</title>
        <authorList>
            <person name="Losada L."/>
            <person name="Ronning C.M."/>
            <person name="DeShazer D."/>
            <person name="Woods D."/>
            <person name="Fedorova N."/>
            <person name="Kim H.S."/>
            <person name="Shabalina S.A."/>
            <person name="Pearson T.R."/>
            <person name="Brinkac L."/>
            <person name="Tan P."/>
            <person name="Nandi T."/>
            <person name="Crabtree J."/>
            <person name="Badger J."/>
            <person name="Beckstrom-Sternberg S."/>
            <person name="Saqib M."/>
            <person name="Schutzer S.E."/>
            <person name="Keim P."/>
            <person name="Nierman W.C."/>
        </authorList>
    </citation>
    <scope>NUCLEOTIDE SEQUENCE [LARGE SCALE GENOMIC DNA]</scope>
    <source>
        <strain>NCTC 10247</strain>
    </source>
</reference>
<dbReference type="EC" id="5.4.99.25" evidence="1"/>
<dbReference type="EMBL" id="CP000548">
    <property type="protein sequence ID" value="ABO04424.1"/>
    <property type="molecule type" value="Genomic_DNA"/>
</dbReference>
<dbReference type="RefSeq" id="WP_004191673.1">
    <property type="nucleotide sequence ID" value="NZ_CP007802.1"/>
</dbReference>
<dbReference type="SMR" id="A3MJW6"/>
<dbReference type="GeneID" id="93060075"/>
<dbReference type="KEGG" id="bmaz:BM44_2093"/>
<dbReference type="KEGG" id="bmn:BMA10247_0993"/>
<dbReference type="PATRIC" id="fig|320389.8.peg.2348"/>
<dbReference type="GO" id="GO:0003723">
    <property type="term" value="F:RNA binding"/>
    <property type="evidence" value="ECO:0007669"/>
    <property type="project" value="InterPro"/>
</dbReference>
<dbReference type="GO" id="GO:0160148">
    <property type="term" value="F:tRNA pseudouridine(55) synthase activity"/>
    <property type="evidence" value="ECO:0007669"/>
    <property type="project" value="UniProtKB-EC"/>
</dbReference>
<dbReference type="GO" id="GO:1990481">
    <property type="term" value="P:mRNA pseudouridine synthesis"/>
    <property type="evidence" value="ECO:0007669"/>
    <property type="project" value="TreeGrafter"/>
</dbReference>
<dbReference type="GO" id="GO:0031119">
    <property type="term" value="P:tRNA pseudouridine synthesis"/>
    <property type="evidence" value="ECO:0007669"/>
    <property type="project" value="UniProtKB-UniRule"/>
</dbReference>
<dbReference type="CDD" id="cd02573">
    <property type="entry name" value="PseudoU_synth_EcTruB"/>
    <property type="match status" value="1"/>
</dbReference>
<dbReference type="CDD" id="cd21152">
    <property type="entry name" value="PUA_TruB_bacterial"/>
    <property type="match status" value="1"/>
</dbReference>
<dbReference type="FunFam" id="3.30.2350.10:FF:000011">
    <property type="entry name" value="tRNA pseudouridine synthase B"/>
    <property type="match status" value="1"/>
</dbReference>
<dbReference type="Gene3D" id="3.30.2350.10">
    <property type="entry name" value="Pseudouridine synthase"/>
    <property type="match status" value="1"/>
</dbReference>
<dbReference type="Gene3D" id="2.30.130.10">
    <property type="entry name" value="PUA domain"/>
    <property type="match status" value="1"/>
</dbReference>
<dbReference type="HAMAP" id="MF_01080">
    <property type="entry name" value="TruB_bact"/>
    <property type="match status" value="1"/>
</dbReference>
<dbReference type="InterPro" id="IPR020103">
    <property type="entry name" value="PsdUridine_synth_cat_dom_sf"/>
</dbReference>
<dbReference type="InterPro" id="IPR002501">
    <property type="entry name" value="PsdUridine_synth_N"/>
</dbReference>
<dbReference type="InterPro" id="IPR015947">
    <property type="entry name" value="PUA-like_sf"/>
</dbReference>
<dbReference type="InterPro" id="IPR036974">
    <property type="entry name" value="PUA_sf"/>
</dbReference>
<dbReference type="InterPro" id="IPR014780">
    <property type="entry name" value="tRNA_psdUridine_synth_TruB"/>
</dbReference>
<dbReference type="InterPro" id="IPR015240">
    <property type="entry name" value="tRNA_sdUridine_synth_fam1_C"/>
</dbReference>
<dbReference type="InterPro" id="IPR032819">
    <property type="entry name" value="TruB_C"/>
</dbReference>
<dbReference type="NCBIfam" id="TIGR00431">
    <property type="entry name" value="TruB"/>
    <property type="match status" value="1"/>
</dbReference>
<dbReference type="PANTHER" id="PTHR13767:SF2">
    <property type="entry name" value="PSEUDOURIDYLATE SYNTHASE TRUB1"/>
    <property type="match status" value="1"/>
</dbReference>
<dbReference type="PANTHER" id="PTHR13767">
    <property type="entry name" value="TRNA-PSEUDOURIDINE SYNTHASE"/>
    <property type="match status" value="1"/>
</dbReference>
<dbReference type="Pfam" id="PF09157">
    <property type="entry name" value="TruB-C_2"/>
    <property type="match status" value="1"/>
</dbReference>
<dbReference type="Pfam" id="PF16198">
    <property type="entry name" value="TruB_C_2"/>
    <property type="match status" value="1"/>
</dbReference>
<dbReference type="Pfam" id="PF01509">
    <property type="entry name" value="TruB_N"/>
    <property type="match status" value="1"/>
</dbReference>
<dbReference type="SUPFAM" id="SSF55120">
    <property type="entry name" value="Pseudouridine synthase"/>
    <property type="match status" value="1"/>
</dbReference>
<dbReference type="SUPFAM" id="SSF88697">
    <property type="entry name" value="PUA domain-like"/>
    <property type="match status" value="1"/>
</dbReference>
<organism>
    <name type="scientific">Burkholderia mallei (strain NCTC 10247)</name>
    <dbReference type="NCBI Taxonomy" id="320389"/>
    <lineage>
        <taxon>Bacteria</taxon>
        <taxon>Pseudomonadati</taxon>
        <taxon>Pseudomonadota</taxon>
        <taxon>Betaproteobacteria</taxon>
        <taxon>Burkholderiales</taxon>
        <taxon>Burkholderiaceae</taxon>
        <taxon>Burkholderia</taxon>
        <taxon>pseudomallei group</taxon>
    </lineage>
</organism>
<name>TRUB_BURM7</name>
<protein>
    <recommendedName>
        <fullName evidence="1">tRNA pseudouridine synthase B</fullName>
        <ecNumber evidence="1">5.4.99.25</ecNumber>
    </recommendedName>
    <alternativeName>
        <fullName evidence="1">tRNA pseudouridine(55) synthase</fullName>
        <shortName evidence="1">Psi55 synthase</shortName>
    </alternativeName>
    <alternativeName>
        <fullName evidence="1">tRNA pseudouridylate synthase</fullName>
    </alternativeName>
    <alternativeName>
        <fullName evidence="1">tRNA-uridine isomerase</fullName>
    </alternativeName>
</protein>
<evidence type="ECO:0000255" key="1">
    <source>
        <dbReference type="HAMAP-Rule" id="MF_01080"/>
    </source>
</evidence>
<comment type="function">
    <text evidence="1">Responsible for synthesis of pseudouridine from uracil-55 in the psi GC loop of transfer RNAs.</text>
</comment>
<comment type="catalytic activity">
    <reaction evidence="1">
        <text>uridine(55) in tRNA = pseudouridine(55) in tRNA</text>
        <dbReference type="Rhea" id="RHEA:42532"/>
        <dbReference type="Rhea" id="RHEA-COMP:10101"/>
        <dbReference type="Rhea" id="RHEA-COMP:10102"/>
        <dbReference type="ChEBI" id="CHEBI:65314"/>
        <dbReference type="ChEBI" id="CHEBI:65315"/>
        <dbReference type="EC" id="5.4.99.25"/>
    </reaction>
</comment>
<comment type="similarity">
    <text evidence="1">Belongs to the pseudouridine synthase TruB family. Type 1 subfamily.</text>
</comment>
<accession>A3MJW6</accession>
<proteinExistence type="inferred from homology"/>
<feature type="chain" id="PRO_1000084558" description="tRNA pseudouridine synthase B">
    <location>
        <begin position="1"/>
        <end position="302"/>
    </location>
</feature>
<feature type="active site" description="Nucleophile" evidence="1">
    <location>
        <position position="43"/>
    </location>
</feature>